<feature type="chain" id="PRO_1000190968" description="Ketol-acid reductoisomerase (NADP(+))">
    <location>
        <begin position="1"/>
        <end position="336"/>
    </location>
</feature>
<feature type="domain" description="KARI N-terminal Rossmann" evidence="2">
    <location>
        <begin position="1"/>
        <end position="181"/>
    </location>
</feature>
<feature type="domain" description="KARI C-terminal knotted" evidence="3">
    <location>
        <begin position="182"/>
        <end position="327"/>
    </location>
</feature>
<feature type="active site" evidence="1">
    <location>
        <position position="107"/>
    </location>
</feature>
<feature type="binding site" evidence="1">
    <location>
        <begin position="24"/>
        <end position="27"/>
    </location>
    <ligand>
        <name>NADP(+)</name>
        <dbReference type="ChEBI" id="CHEBI:58349"/>
    </ligand>
</feature>
<feature type="binding site" evidence="1">
    <location>
        <position position="47"/>
    </location>
    <ligand>
        <name>NADP(+)</name>
        <dbReference type="ChEBI" id="CHEBI:58349"/>
    </ligand>
</feature>
<feature type="binding site" evidence="1">
    <location>
        <position position="50"/>
    </location>
    <ligand>
        <name>NADP(+)</name>
        <dbReference type="ChEBI" id="CHEBI:58349"/>
    </ligand>
</feature>
<feature type="binding site" evidence="1">
    <location>
        <position position="52"/>
    </location>
    <ligand>
        <name>NADP(+)</name>
        <dbReference type="ChEBI" id="CHEBI:58349"/>
    </ligand>
</feature>
<feature type="binding site" evidence="1">
    <location>
        <begin position="82"/>
        <end position="85"/>
    </location>
    <ligand>
        <name>NADP(+)</name>
        <dbReference type="ChEBI" id="CHEBI:58349"/>
    </ligand>
</feature>
<feature type="binding site" evidence="1">
    <location>
        <position position="133"/>
    </location>
    <ligand>
        <name>NADP(+)</name>
        <dbReference type="ChEBI" id="CHEBI:58349"/>
    </ligand>
</feature>
<feature type="binding site" evidence="1">
    <location>
        <position position="190"/>
    </location>
    <ligand>
        <name>Mg(2+)</name>
        <dbReference type="ChEBI" id="CHEBI:18420"/>
        <label>1</label>
    </ligand>
</feature>
<feature type="binding site" evidence="1">
    <location>
        <position position="190"/>
    </location>
    <ligand>
        <name>Mg(2+)</name>
        <dbReference type="ChEBI" id="CHEBI:18420"/>
        <label>2</label>
    </ligand>
</feature>
<feature type="binding site" evidence="1">
    <location>
        <position position="194"/>
    </location>
    <ligand>
        <name>Mg(2+)</name>
        <dbReference type="ChEBI" id="CHEBI:18420"/>
        <label>1</label>
    </ligand>
</feature>
<feature type="binding site" evidence="1">
    <location>
        <position position="226"/>
    </location>
    <ligand>
        <name>Mg(2+)</name>
        <dbReference type="ChEBI" id="CHEBI:18420"/>
        <label>2</label>
    </ligand>
</feature>
<feature type="binding site" evidence="1">
    <location>
        <position position="230"/>
    </location>
    <ligand>
        <name>Mg(2+)</name>
        <dbReference type="ChEBI" id="CHEBI:18420"/>
        <label>2</label>
    </ligand>
</feature>
<feature type="binding site" evidence="1">
    <location>
        <position position="251"/>
    </location>
    <ligand>
        <name>substrate</name>
    </ligand>
</feature>
<reference key="1">
    <citation type="submission" date="2009-01" db="EMBL/GenBank/DDBJ databases">
        <title>Complete sequence of Geobacter sp. FRC-32.</title>
        <authorList>
            <consortium name="US DOE Joint Genome Institute"/>
            <person name="Lucas S."/>
            <person name="Copeland A."/>
            <person name="Lapidus A."/>
            <person name="Glavina del Rio T."/>
            <person name="Dalin E."/>
            <person name="Tice H."/>
            <person name="Bruce D."/>
            <person name="Goodwin L."/>
            <person name="Pitluck S."/>
            <person name="Saunders E."/>
            <person name="Brettin T."/>
            <person name="Detter J.C."/>
            <person name="Han C."/>
            <person name="Larimer F."/>
            <person name="Land M."/>
            <person name="Hauser L."/>
            <person name="Kyrpides N."/>
            <person name="Ovchinnikova G."/>
            <person name="Kostka J."/>
            <person name="Richardson P."/>
        </authorList>
    </citation>
    <scope>NUCLEOTIDE SEQUENCE [LARGE SCALE GENOMIC DNA]</scope>
    <source>
        <strain>DSM 22248 / JCM 15807 / FRC-32</strain>
    </source>
</reference>
<comment type="function">
    <text evidence="1">Involved in the biosynthesis of branched-chain amino acids (BCAA). Catalyzes an alkyl-migration followed by a ketol-acid reduction of (S)-2-acetolactate (S2AL) to yield (R)-2,3-dihydroxy-isovalerate. In the isomerase reaction, S2AL is rearranged via a Mg-dependent methyl migration to produce 3-hydroxy-3-methyl-2-ketobutyrate (HMKB). In the reductase reaction, this 2-ketoacid undergoes a metal-dependent reduction by NADPH to yield (R)-2,3-dihydroxy-isovalerate.</text>
</comment>
<comment type="catalytic activity">
    <reaction evidence="1">
        <text>(2R)-2,3-dihydroxy-3-methylbutanoate + NADP(+) = (2S)-2-acetolactate + NADPH + H(+)</text>
        <dbReference type="Rhea" id="RHEA:22068"/>
        <dbReference type="ChEBI" id="CHEBI:15378"/>
        <dbReference type="ChEBI" id="CHEBI:49072"/>
        <dbReference type="ChEBI" id="CHEBI:57783"/>
        <dbReference type="ChEBI" id="CHEBI:58349"/>
        <dbReference type="ChEBI" id="CHEBI:58476"/>
        <dbReference type="EC" id="1.1.1.86"/>
    </reaction>
</comment>
<comment type="catalytic activity">
    <reaction evidence="1">
        <text>(2R,3R)-2,3-dihydroxy-3-methylpentanoate + NADP(+) = (S)-2-ethyl-2-hydroxy-3-oxobutanoate + NADPH + H(+)</text>
        <dbReference type="Rhea" id="RHEA:13493"/>
        <dbReference type="ChEBI" id="CHEBI:15378"/>
        <dbReference type="ChEBI" id="CHEBI:49256"/>
        <dbReference type="ChEBI" id="CHEBI:49258"/>
        <dbReference type="ChEBI" id="CHEBI:57783"/>
        <dbReference type="ChEBI" id="CHEBI:58349"/>
        <dbReference type="EC" id="1.1.1.86"/>
    </reaction>
</comment>
<comment type="cofactor">
    <cofactor evidence="1">
        <name>Mg(2+)</name>
        <dbReference type="ChEBI" id="CHEBI:18420"/>
    </cofactor>
    <text evidence="1">Binds 2 magnesium ions per subunit.</text>
</comment>
<comment type="pathway">
    <text evidence="1">Amino-acid biosynthesis; L-isoleucine biosynthesis; L-isoleucine from 2-oxobutanoate: step 2/4.</text>
</comment>
<comment type="pathway">
    <text evidence="1">Amino-acid biosynthesis; L-valine biosynthesis; L-valine from pyruvate: step 2/4.</text>
</comment>
<comment type="similarity">
    <text evidence="1">Belongs to the ketol-acid reductoisomerase family.</text>
</comment>
<evidence type="ECO:0000255" key="1">
    <source>
        <dbReference type="HAMAP-Rule" id="MF_00435"/>
    </source>
</evidence>
<evidence type="ECO:0000255" key="2">
    <source>
        <dbReference type="PROSITE-ProRule" id="PRU01197"/>
    </source>
</evidence>
<evidence type="ECO:0000255" key="3">
    <source>
        <dbReference type="PROSITE-ProRule" id="PRU01198"/>
    </source>
</evidence>
<organism>
    <name type="scientific">Geotalea daltonii (strain DSM 22248 / JCM 15807 / FRC-32)</name>
    <name type="common">Geobacter daltonii</name>
    <dbReference type="NCBI Taxonomy" id="316067"/>
    <lineage>
        <taxon>Bacteria</taxon>
        <taxon>Pseudomonadati</taxon>
        <taxon>Thermodesulfobacteriota</taxon>
        <taxon>Desulfuromonadia</taxon>
        <taxon>Geobacterales</taxon>
        <taxon>Geobacteraceae</taxon>
        <taxon>Geotalea</taxon>
    </lineage>
</organism>
<dbReference type="EC" id="1.1.1.86" evidence="1"/>
<dbReference type="EMBL" id="CP001390">
    <property type="protein sequence ID" value="ACM19866.1"/>
    <property type="molecule type" value="Genomic_DNA"/>
</dbReference>
<dbReference type="RefSeq" id="WP_012646595.1">
    <property type="nucleotide sequence ID" value="NC_011979.1"/>
</dbReference>
<dbReference type="SMR" id="B9M5B1"/>
<dbReference type="STRING" id="316067.Geob_1507"/>
<dbReference type="KEGG" id="geo:Geob_1507"/>
<dbReference type="eggNOG" id="COG0059">
    <property type="taxonomic scope" value="Bacteria"/>
</dbReference>
<dbReference type="HOGENOM" id="CLU_033821_0_1_7"/>
<dbReference type="OrthoDB" id="9804088at2"/>
<dbReference type="UniPathway" id="UPA00047">
    <property type="reaction ID" value="UER00056"/>
</dbReference>
<dbReference type="UniPathway" id="UPA00049">
    <property type="reaction ID" value="UER00060"/>
</dbReference>
<dbReference type="Proteomes" id="UP000007721">
    <property type="component" value="Chromosome"/>
</dbReference>
<dbReference type="GO" id="GO:0005829">
    <property type="term" value="C:cytosol"/>
    <property type="evidence" value="ECO:0007669"/>
    <property type="project" value="TreeGrafter"/>
</dbReference>
<dbReference type="GO" id="GO:0004455">
    <property type="term" value="F:ketol-acid reductoisomerase activity"/>
    <property type="evidence" value="ECO:0007669"/>
    <property type="project" value="UniProtKB-UniRule"/>
</dbReference>
<dbReference type="GO" id="GO:0000287">
    <property type="term" value="F:magnesium ion binding"/>
    <property type="evidence" value="ECO:0007669"/>
    <property type="project" value="UniProtKB-UniRule"/>
</dbReference>
<dbReference type="GO" id="GO:0050661">
    <property type="term" value="F:NADP binding"/>
    <property type="evidence" value="ECO:0007669"/>
    <property type="project" value="InterPro"/>
</dbReference>
<dbReference type="GO" id="GO:0009097">
    <property type="term" value="P:isoleucine biosynthetic process"/>
    <property type="evidence" value="ECO:0007669"/>
    <property type="project" value="UniProtKB-UniRule"/>
</dbReference>
<dbReference type="GO" id="GO:0009099">
    <property type="term" value="P:L-valine biosynthetic process"/>
    <property type="evidence" value="ECO:0007669"/>
    <property type="project" value="UniProtKB-UniRule"/>
</dbReference>
<dbReference type="FunFam" id="3.40.50.720:FF:000023">
    <property type="entry name" value="Ketol-acid reductoisomerase (NADP(+))"/>
    <property type="match status" value="1"/>
</dbReference>
<dbReference type="Gene3D" id="6.10.240.10">
    <property type="match status" value="1"/>
</dbReference>
<dbReference type="Gene3D" id="3.40.50.720">
    <property type="entry name" value="NAD(P)-binding Rossmann-like Domain"/>
    <property type="match status" value="1"/>
</dbReference>
<dbReference type="HAMAP" id="MF_00435">
    <property type="entry name" value="IlvC"/>
    <property type="match status" value="1"/>
</dbReference>
<dbReference type="InterPro" id="IPR008927">
    <property type="entry name" value="6-PGluconate_DH-like_C_sf"/>
</dbReference>
<dbReference type="InterPro" id="IPR013023">
    <property type="entry name" value="KARI"/>
</dbReference>
<dbReference type="InterPro" id="IPR000506">
    <property type="entry name" value="KARI_C"/>
</dbReference>
<dbReference type="InterPro" id="IPR013116">
    <property type="entry name" value="KARI_N"/>
</dbReference>
<dbReference type="InterPro" id="IPR014359">
    <property type="entry name" value="KARI_prok"/>
</dbReference>
<dbReference type="InterPro" id="IPR036291">
    <property type="entry name" value="NAD(P)-bd_dom_sf"/>
</dbReference>
<dbReference type="NCBIfam" id="TIGR00465">
    <property type="entry name" value="ilvC"/>
    <property type="match status" value="1"/>
</dbReference>
<dbReference type="NCBIfam" id="NF004017">
    <property type="entry name" value="PRK05479.1"/>
    <property type="match status" value="1"/>
</dbReference>
<dbReference type="NCBIfam" id="NF009940">
    <property type="entry name" value="PRK13403.1"/>
    <property type="match status" value="1"/>
</dbReference>
<dbReference type="PANTHER" id="PTHR21371">
    <property type="entry name" value="KETOL-ACID REDUCTOISOMERASE, MITOCHONDRIAL"/>
    <property type="match status" value="1"/>
</dbReference>
<dbReference type="PANTHER" id="PTHR21371:SF1">
    <property type="entry name" value="KETOL-ACID REDUCTOISOMERASE, MITOCHONDRIAL"/>
    <property type="match status" value="1"/>
</dbReference>
<dbReference type="Pfam" id="PF01450">
    <property type="entry name" value="KARI_C"/>
    <property type="match status" value="1"/>
</dbReference>
<dbReference type="Pfam" id="PF07991">
    <property type="entry name" value="KARI_N"/>
    <property type="match status" value="1"/>
</dbReference>
<dbReference type="PIRSF" id="PIRSF000116">
    <property type="entry name" value="IlvC_gammaproteo"/>
    <property type="match status" value="1"/>
</dbReference>
<dbReference type="SUPFAM" id="SSF48179">
    <property type="entry name" value="6-phosphogluconate dehydrogenase C-terminal domain-like"/>
    <property type="match status" value="1"/>
</dbReference>
<dbReference type="SUPFAM" id="SSF51735">
    <property type="entry name" value="NAD(P)-binding Rossmann-fold domains"/>
    <property type="match status" value="1"/>
</dbReference>
<dbReference type="PROSITE" id="PS51851">
    <property type="entry name" value="KARI_C"/>
    <property type="match status" value="1"/>
</dbReference>
<dbReference type="PROSITE" id="PS51850">
    <property type="entry name" value="KARI_N"/>
    <property type="match status" value="1"/>
</dbReference>
<protein>
    <recommendedName>
        <fullName evidence="1">Ketol-acid reductoisomerase (NADP(+))</fullName>
        <shortName evidence="1">KARI</shortName>
        <ecNumber evidence="1">1.1.1.86</ecNumber>
    </recommendedName>
    <alternativeName>
        <fullName evidence="1">Acetohydroxy-acid isomeroreductase</fullName>
        <shortName evidence="1">AHIR</shortName>
    </alternativeName>
    <alternativeName>
        <fullName evidence="1">Alpha-keto-beta-hydroxylacyl reductoisomerase</fullName>
    </alternativeName>
    <alternativeName>
        <fullName evidence="1">Ketol-acid reductoisomerase type 1</fullName>
    </alternativeName>
    <alternativeName>
        <fullName evidence="1">Ketol-acid reductoisomerase type I</fullName>
    </alternativeName>
</protein>
<name>ILVC_GEODF</name>
<gene>
    <name evidence="1" type="primary">ilvC</name>
    <name type="ordered locus">Geob_1507</name>
</gene>
<sequence>MNVYYDKDCNLAIIKGMKVTIVGYGSQGHAHACNLKDSGVDVTVALRAGSASVVKAQNAGLKVASVADAVASADLVMILTPDEFQSSLYRDEIEPKLKQGATLAFAHGFAIHYNQIVPRNDLDVVMIAPKAPGHTVRSEFVKGGGIPDLIAVFQNASGKAREVALSYASAIGGGRTGIIETTFQDETETDLFGEQAVLCGGAVELVKAGFETLVEAGYAPEMAYFECLHELKLIVDLMYEGGIANMNYSISNNAEYGEYVTGPQVINAESRKAMKECLANIQNGEYAKRFILEGMANYPEMTARRRLNAAHPIEQVGGKLRSMMPWIQKIVDKSKN</sequence>
<keyword id="KW-0028">Amino-acid biosynthesis</keyword>
<keyword id="KW-0100">Branched-chain amino acid biosynthesis</keyword>
<keyword id="KW-0460">Magnesium</keyword>
<keyword id="KW-0479">Metal-binding</keyword>
<keyword id="KW-0521">NADP</keyword>
<keyword id="KW-0560">Oxidoreductase</keyword>
<keyword id="KW-1185">Reference proteome</keyword>
<accession>B9M5B1</accession>
<proteinExistence type="inferred from homology"/>